<proteinExistence type="inferred from homology"/>
<accession>A1BF33</accession>
<organism>
    <name type="scientific">Chlorobium phaeobacteroides (strain DSM 266 / SMG 266 / 2430)</name>
    <dbReference type="NCBI Taxonomy" id="290317"/>
    <lineage>
        <taxon>Bacteria</taxon>
        <taxon>Pseudomonadati</taxon>
        <taxon>Chlorobiota</taxon>
        <taxon>Chlorobiia</taxon>
        <taxon>Chlorobiales</taxon>
        <taxon>Chlorobiaceae</taxon>
        <taxon>Chlorobium/Pelodictyon group</taxon>
        <taxon>Chlorobium</taxon>
    </lineage>
</organism>
<evidence type="ECO:0000255" key="1">
    <source>
        <dbReference type="HAMAP-Rule" id="MF_01356"/>
    </source>
</evidence>
<gene>
    <name evidence="1" type="primary">nuoB</name>
    <name type="ordered locus">Cpha266_0962</name>
</gene>
<dbReference type="EC" id="7.1.1.-" evidence="1"/>
<dbReference type="EMBL" id="CP000492">
    <property type="protein sequence ID" value="ABL65010.1"/>
    <property type="molecule type" value="Genomic_DNA"/>
</dbReference>
<dbReference type="RefSeq" id="WP_011744837.1">
    <property type="nucleotide sequence ID" value="NC_008639.1"/>
</dbReference>
<dbReference type="SMR" id="A1BF33"/>
<dbReference type="STRING" id="290317.Cpha266_0962"/>
<dbReference type="KEGG" id="cph:Cpha266_0962"/>
<dbReference type="eggNOG" id="COG0377">
    <property type="taxonomic scope" value="Bacteria"/>
</dbReference>
<dbReference type="HOGENOM" id="CLU_055737_7_3_10"/>
<dbReference type="OrthoDB" id="9786737at2"/>
<dbReference type="Proteomes" id="UP000008701">
    <property type="component" value="Chromosome"/>
</dbReference>
<dbReference type="GO" id="GO:0005886">
    <property type="term" value="C:plasma membrane"/>
    <property type="evidence" value="ECO:0007669"/>
    <property type="project" value="UniProtKB-SubCell"/>
</dbReference>
<dbReference type="GO" id="GO:0045271">
    <property type="term" value="C:respiratory chain complex I"/>
    <property type="evidence" value="ECO:0007669"/>
    <property type="project" value="TreeGrafter"/>
</dbReference>
<dbReference type="GO" id="GO:0051539">
    <property type="term" value="F:4 iron, 4 sulfur cluster binding"/>
    <property type="evidence" value="ECO:0007669"/>
    <property type="project" value="UniProtKB-KW"/>
</dbReference>
<dbReference type="GO" id="GO:0005506">
    <property type="term" value="F:iron ion binding"/>
    <property type="evidence" value="ECO:0007669"/>
    <property type="project" value="UniProtKB-UniRule"/>
</dbReference>
<dbReference type="GO" id="GO:0008137">
    <property type="term" value="F:NADH dehydrogenase (ubiquinone) activity"/>
    <property type="evidence" value="ECO:0007669"/>
    <property type="project" value="InterPro"/>
</dbReference>
<dbReference type="GO" id="GO:0050136">
    <property type="term" value="F:NADH:ubiquinone reductase (non-electrogenic) activity"/>
    <property type="evidence" value="ECO:0007669"/>
    <property type="project" value="UniProtKB-UniRule"/>
</dbReference>
<dbReference type="GO" id="GO:0048038">
    <property type="term" value="F:quinone binding"/>
    <property type="evidence" value="ECO:0007669"/>
    <property type="project" value="UniProtKB-KW"/>
</dbReference>
<dbReference type="GO" id="GO:0009060">
    <property type="term" value="P:aerobic respiration"/>
    <property type="evidence" value="ECO:0007669"/>
    <property type="project" value="TreeGrafter"/>
</dbReference>
<dbReference type="GO" id="GO:0015990">
    <property type="term" value="P:electron transport coupled proton transport"/>
    <property type="evidence" value="ECO:0007669"/>
    <property type="project" value="TreeGrafter"/>
</dbReference>
<dbReference type="FunFam" id="3.40.50.12280:FF:000002">
    <property type="entry name" value="NADH-quinone oxidoreductase subunit B"/>
    <property type="match status" value="1"/>
</dbReference>
<dbReference type="Gene3D" id="3.40.50.12280">
    <property type="match status" value="1"/>
</dbReference>
<dbReference type="HAMAP" id="MF_01356">
    <property type="entry name" value="NDH1_NuoB"/>
    <property type="match status" value="1"/>
</dbReference>
<dbReference type="InterPro" id="IPR006137">
    <property type="entry name" value="NADH_UbQ_OxRdtase-like_20kDa"/>
</dbReference>
<dbReference type="InterPro" id="IPR006138">
    <property type="entry name" value="NADH_UQ_OxRdtase_20Kd_su"/>
</dbReference>
<dbReference type="NCBIfam" id="TIGR01957">
    <property type="entry name" value="nuoB_fam"/>
    <property type="match status" value="1"/>
</dbReference>
<dbReference type="NCBIfam" id="NF005012">
    <property type="entry name" value="PRK06411.1"/>
    <property type="match status" value="1"/>
</dbReference>
<dbReference type="NCBIfam" id="NF011388">
    <property type="entry name" value="PRK14813.1"/>
    <property type="match status" value="1"/>
</dbReference>
<dbReference type="PANTHER" id="PTHR11995">
    <property type="entry name" value="NADH DEHYDROGENASE"/>
    <property type="match status" value="1"/>
</dbReference>
<dbReference type="PANTHER" id="PTHR11995:SF33">
    <property type="entry name" value="NADH-QUINONE OXIDOREDUCTASE SUBUNIT B 2"/>
    <property type="match status" value="1"/>
</dbReference>
<dbReference type="Pfam" id="PF01058">
    <property type="entry name" value="Oxidored_q6"/>
    <property type="match status" value="1"/>
</dbReference>
<dbReference type="SUPFAM" id="SSF56770">
    <property type="entry name" value="HydA/Nqo6-like"/>
    <property type="match status" value="1"/>
</dbReference>
<dbReference type="PROSITE" id="PS01150">
    <property type="entry name" value="COMPLEX1_20K"/>
    <property type="match status" value="1"/>
</dbReference>
<feature type="chain" id="PRO_0000376172" description="NADH-quinone oxidoreductase subunit B">
    <location>
        <begin position="1"/>
        <end position="189"/>
    </location>
</feature>
<feature type="binding site" evidence="1">
    <location>
        <position position="39"/>
    </location>
    <ligand>
        <name>[4Fe-4S] cluster</name>
        <dbReference type="ChEBI" id="CHEBI:49883"/>
    </ligand>
</feature>
<feature type="binding site" evidence="1">
    <location>
        <position position="40"/>
    </location>
    <ligand>
        <name>[4Fe-4S] cluster</name>
        <dbReference type="ChEBI" id="CHEBI:49883"/>
    </ligand>
</feature>
<feature type="binding site" evidence="1">
    <location>
        <position position="104"/>
    </location>
    <ligand>
        <name>[4Fe-4S] cluster</name>
        <dbReference type="ChEBI" id="CHEBI:49883"/>
    </ligand>
</feature>
<feature type="binding site" evidence="1">
    <location>
        <position position="135"/>
    </location>
    <ligand>
        <name>[4Fe-4S] cluster</name>
        <dbReference type="ChEBI" id="CHEBI:49883"/>
    </ligand>
</feature>
<comment type="function">
    <text evidence="1">NDH-1 shuttles electrons from NADH, via FMN and iron-sulfur (Fe-S) centers, to quinones in the respiratory chain. The immediate electron acceptor for the enzyme in this species is believed to be a menaquinone. Couples the redox reaction to proton translocation (for every two electrons transferred, four hydrogen ions are translocated across the cytoplasmic membrane), and thus conserves the redox energy in a proton gradient.</text>
</comment>
<comment type="catalytic activity">
    <reaction evidence="1">
        <text>a quinone + NADH + 5 H(+)(in) = a quinol + NAD(+) + 4 H(+)(out)</text>
        <dbReference type="Rhea" id="RHEA:57888"/>
        <dbReference type="ChEBI" id="CHEBI:15378"/>
        <dbReference type="ChEBI" id="CHEBI:24646"/>
        <dbReference type="ChEBI" id="CHEBI:57540"/>
        <dbReference type="ChEBI" id="CHEBI:57945"/>
        <dbReference type="ChEBI" id="CHEBI:132124"/>
    </reaction>
</comment>
<comment type="cofactor">
    <cofactor evidence="1">
        <name>[4Fe-4S] cluster</name>
        <dbReference type="ChEBI" id="CHEBI:49883"/>
    </cofactor>
    <text evidence="1">Binds 1 [4Fe-4S] cluster.</text>
</comment>
<comment type="subunit">
    <text evidence="1">NDH-1 is composed of 14 different subunits. Subunits NuoB, C, D, E, F, and G constitute the peripheral sector of the complex.</text>
</comment>
<comment type="subcellular location">
    <subcellularLocation>
        <location evidence="1">Cell inner membrane</location>
        <topology evidence="1">Peripheral membrane protein</topology>
        <orientation evidence="1">Cytoplasmic side</orientation>
    </subcellularLocation>
</comment>
<comment type="similarity">
    <text evidence="1">Belongs to the complex I 20 kDa subunit family.</text>
</comment>
<reference key="1">
    <citation type="submission" date="2006-12" db="EMBL/GenBank/DDBJ databases">
        <title>Complete sequence of Chlorobium phaeobacteroides DSM 266.</title>
        <authorList>
            <consortium name="US DOE Joint Genome Institute"/>
            <person name="Copeland A."/>
            <person name="Lucas S."/>
            <person name="Lapidus A."/>
            <person name="Barry K."/>
            <person name="Detter J.C."/>
            <person name="Glavina del Rio T."/>
            <person name="Hammon N."/>
            <person name="Israni S."/>
            <person name="Pitluck S."/>
            <person name="Goltsman E."/>
            <person name="Schmutz J."/>
            <person name="Larimer F."/>
            <person name="Land M."/>
            <person name="Hauser L."/>
            <person name="Mikhailova N."/>
            <person name="Li T."/>
            <person name="Overmann J."/>
            <person name="Bryant D.A."/>
            <person name="Richardson P."/>
        </authorList>
    </citation>
    <scope>NUCLEOTIDE SEQUENCE [LARGE SCALE GENOMIC DNA]</scope>
    <source>
        <strain>DSM 266 / SMG 266 / 2430</strain>
    </source>
</reference>
<name>NUOB_CHLPD</name>
<sequence>MGLLDAGITKHNVLITSVDNVLNWARLSSLWPMGFGLACCAIEMMATNASNYDLERFGIFPRSSPRQSDLMLVAGTVSMKMAERVVRLYEQMPEPRYVLSMGSCSNCGGPYWEHGYHVLKGVDRIIPVDVYVPGCPPRPESLIGGLMKVQELIRMEQIGISRADALKKLAEKSVDPRVVIEEERKALRA</sequence>
<keyword id="KW-0004">4Fe-4S</keyword>
<keyword id="KW-0997">Cell inner membrane</keyword>
<keyword id="KW-1003">Cell membrane</keyword>
<keyword id="KW-0408">Iron</keyword>
<keyword id="KW-0411">Iron-sulfur</keyword>
<keyword id="KW-0472">Membrane</keyword>
<keyword id="KW-0479">Metal-binding</keyword>
<keyword id="KW-0520">NAD</keyword>
<keyword id="KW-0874">Quinone</keyword>
<keyword id="KW-1185">Reference proteome</keyword>
<keyword id="KW-1278">Translocase</keyword>
<keyword id="KW-0813">Transport</keyword>
<protein>
    <recommendedName>
        <fullName evidence="1">NADH-quinone oxidoreductase subunit B</fullName>
        <ecNumber evidence="1">7.1.1.-</ecNumber>
    </recommendedName>
    <alternativeName>
        <fullName evidence="1">NADH dehydrogenase I subunit B</fullName>
    </alternativeName>
    <alternativeName>
        <fullName evidence="1">NDH-1 subunit B</fullName>
    </alternativeName>
</protein>